<reference key="1">
    <citation type="journal article" date="1994" name="Curr. Top. Microbiol. Immunol.">
        <title>Primer-directed sequencing of human papillomavirus types.</title>
        <authorList>
            <person name="Delius H."/>
            <person name="Hofmann B."/>
        </authorList>
    </citation>
    <scope>NUCLEOTIDE SEQUENCE [GENOMIC DNA]</scope>
</reference>
<keyword id="KW-0067">ATP-binding</keyword>
<keyword id="KW-0235">DNA replication</keyword>
<keyword id="KW-0238">DNA-binding</keyword>
<keyword id="KW-0244">Early protein</keyword>
<keyword id="KW-0347">Helicase</keyword>
<keyword id="KW-1048">Host nucleus</keyword>
<keyword id="KW-0378">Hydrolase</keyword>
<keyword id="KW-0413">Isomerase</keyword>
<keyword id="KW-1017">Isopeptide bond</keyword>
<keyword id="KW-0547">Nucleotide-binding</keyword>
<keyword id="KW-0597">Phosphoprotein</keyword>
<keyword id="KW-1185">Reference proteome</keyword>
<keyword id="KW-0832">Ubl conjugation</keyword>
<comment type="function">
    <text evidence="1">ATP-dependent DNA 3'-5' helicase required for initiation of viral DNA replication. It forms a complex with the viral E2 protein. The E1-E2 complex binds to the replication origin which contains binding sites for both proteins. During the initial step, a dimer of E1 interacts with a dimer of protein E2 leading to a complex that binds the viral origin of replication with high specificity. Then, a second dimer of E1 displaces the E2 dimer in an ATP-dependent manner to form the E1 tetramer. Following this, two E1 monomers are added to each half of the site, which results in the formation of two E1 trimers on the viral ori. Subsequently, two hexamers will be created. The double hexamer acts as a bi-directional helicase machinery and unwinds the viral DNA and then recruits the host DNA polymerase to start replication.</text>
</comment>
<comment type="catalytic activity">
    <reaction evidence="1">
        <text>Couples ATP hydrolysis with the unwinding of duplex DNA by translocating in the 3'-5' direction.</text>
        <dbReference type="EC" id="5.6.2.4"/>
    </reaction>
</comment>
<comment type="catalytic activity">
    <reaction evidence="1">
        <text>ATP + H2O = ADP + phosphate + H(+)</text>
        <dbReference type="Rhea" id="RHEA:13065"/>
        <dbReference type="ChEBI" id="CHEBI:15377"/>
        <dbReference type="ChEBI" id="CHEBI:15378"/>
        <dbReference type="ChEBI" id="CHEBI:30616"/>
        <dbReference type="ChEBI" id="CHEBI:43474"/>
        <dbReference type="ChEBI" id="CHEBI:456216"/>
        <dbReference type="EC" id="5.6.2.4"/>
    </reaction>
</comment>
<comment type="subunit">
    <text evidence="1">Can form hexamers. Interacts with E2 protein; this interaction increases E1 DNA binding specificity. Interacts with host DNA polymerase subunit POLA2. Interacts with host single stranded DNA-binding protein RPA1. Interacts with host TOP1; this interaction stimulates the enzymatic activity of TOP1.</text>
</comment>
<comment type="subcellular location">
    <subcellularLocation>
        <location evidence="1">Host nucleus</location>
    </subcellularLocation>
</comment>
<comment type="PTM">
    <text evidence="1">Phosphorylated.</text>
</comment>
<comment type="PTM">
    <text evidence="1">Sumoylated.</text>
</comment>
<comment type="similarity">
    <text evidence="1">Belongs to the papillomaviridae E1 protein family.</text>
</comment>
<name>VE1_HPV10</name>
<accession>P36720</accession>
<evidence type="ECO:0000255" key="1">
    <source>
        <dbReference type="HAMAP-Rule" id="MF_04000"/>
    </source>
</evidence>
<evidence type="ECO:0000256" key="2">
    <source>
        <dbReference type="SAM" id="MobiDB-lite"/>
    </source>
</evidence>
<organismHost>
    <name type="scientific">Homo sapiens</name>
    <name type="common">Human</name>
    <dbReference type="NCBI Taxonomy" id="9606"/>
</organismHost>
<organism>
    <name type="scientific">Human papillomavirus type 10</name>
    <dbReference type="NCBI Taxonomy" id="333759"/>
    <lineage>
        <taxon>Viruses</taxon>
        <taxon>Monodnaviria</taxon>
        <taxon>Shotokuvirae</taxon>
        <taxon>Cossaviricota</taxon>
        <taxon>Papovaviricetes</taxon>
        <taxon>Zurhausenvirales</taxon>
        <taxon>Papillomaviridae</taxon>
        <taxon>Firstpapillomavirinae</taxon>
        <taxon>Alphapapillomavirus</taxon>
        <taxon>Alphapapillomavirus 2</taxon>
    </lineage>
</organism>
<sequence>MDDNTGTEGGACSESERAGGWFIVEAIVDRRTGDPISSDDDEEEDEAGEDFVDFIDDTRSLGDGQEVAQELFQQQTAADDDVAVQTVKRKFAPSPYFSPVCEQASIEHELSPRLDAIKLGRQSAKAKRRLFELPDSGYGQTQVDTESGPKQVQGSSETQDGRQDDDEGSVVQSTLDTGNQNGRQNNDEGSGRNVGEHGSQEEERAGGDGEESDLQSTSTGKGAGGVVEILRASNKKATLLGKFKEQFGLGYNELIRHFKSDRTSCADWVVCVFGVFCTVAEGIKTLIQPLCDYAHIQVLPCQWGMTVLMLVRYKRAKNRETVAKGLSTLLNVPESQMLIEPPKLRSGPAALYWYKTSMSSCSDVYGETPEWIVRQTMVGHAMEDAQFSLSEMVQWAYDHDITDESTLAYEYALIADTDSNAAAFLSSNCQAKYLKDACTMCRHYKRGEQARMSMSEWIWFRGDKVQGDGDWKPIVQFLRYQDVEFIPFLCAFKTFLQGVPKKSCLVFYGPADTGKSYFCMSLLRFLGGAVISYANSSSHFWLQPLSEAKIGLLDDATSQCWNYIDTYLRNALDGNQICVDRKHRALLQLKCPPLLITTNINPLTDERWKFLRSRLQLFTFKNPFPVTTQGEPMYTLNDQNWKCFFRRLWARLSLTDPEDEEEHGNPSEPFRCVPGQNARTI</sequence>
<gene>
    <name evidence="1" type="primary">E1</name>
</gene>
<dbReference type="EC" id="5.6.2.4" evidence="1"/>
<dbReference type="EMBL" id="X74465">
    <property type="protein sequence ID" value="CAA52491.1"/>
    <property type="molecule type" value="Genomic_DNA"/>
</dbReference>
<dbReference type="PIR" id="S36534">
    <property type="entry name" value="S36534"/>
</dbReference>
<dbReference type="RefSeq" id="NP_041743.1">
    <property type="nucleotide sequence ID" value="NC_001576.1"/>
</dbReference>
<dbReference type="SMR" id="P36720"/>
<dbReference type="BioGRID" id="4263548">
    <property type="interactions" value="2"/>
</dbReference>
<dbReference type="GeneID" id="1489373"/>
<dbReference type="KEGG" id="vg:1489373"/>
<dbReference type="OrthoDB" id="4795at10239"/>
<dbReference type="Proteomes" id="UP000009105">
    <property type="component" value="Genome"/>
</dbReference>
<dbReference type="GO" id="GO:0042025">
    <property type="term" value="C:host cell nucleus"/>
    <property type="evidence" value="ECO:0007669"/>
    <property type="project" value="UniProtKB-SubCell"/>
</dbReference>
<dbReference type="GO" id="GO:0005524">
    <property type="term" value="F:ATP binding"/>
    <property type="evidence" value="ECO:0007669"/>
    <property type="project" value="UniProtKB-UniRule"/>
</dbReference>
<dbReference type="GO" id="GO:0016887">
    <property type="term" value="F:ATP hydrolysis activity"/>
    <property type="evidence" value="ECO:0007669"/>
    <property type="project" value="RHEA"/>
</dbReference>
<dbReference type="GO" id="GO:0003677">
    <property type="term" value="F:DNA binding"/>
    <property type="evidence" value="ECO:0007669"/>
    <property type="project" value="UniProtKB-UniRule"/>
</dbReference>
<dbReference type="GO" id="GO:0003678">
    <property type="term" value="F:DNA helicase activity"/>
    <property type="evidence" value="ECO:0007669"/>
    <property type="project" value="UniProtKB-UniRule"/>
</dbReference>
<dbReference type="GO" id="GO:0006260">
    <property type="term" value="P:DNA replication"/>
    <property type="evidence" value="ECO:0007669"/>
    <property type="project" value="UniProtKB-UniRule"/>
</dbReference>
<dbReference type="Gene3D" id="3.40.1310.10">
    <property type="match status" value="1"/>
</dbReference>
<dbReference type="Gene3D" id="3.40.50.300">
    <property type="entry name" value="P-loop containing nucleotide triphosphate hydrolases"/>
    <property type="match status" value="1"/>
</dbReference>
<dbReference type="Gene3D" id="1.10.10.510">
    <property type="entry name" value="Zinc finger, large T-antigen D1 domain"/>
    <property type="match status" value="1"/>
</dbReference>
<dbReference type="HAMAP" id="MF_04000">
    <property type="entry name" value="PPV_E1"/>
    <property type="match status" value="1"/>
</dbReference>
<dbReference type="InterPro" id="IPR014015">
    <property type="entry name" value="Helicase_SF3_DNA-vir"/>
</dbReference>
<dbReference type="InterPro" id="IPR027417">
    <property type="entry name" value="P-loop_NTPase"/>
</dbReference>
<dbReference type="InterPro" id="IPR001177">
    <property type="entry name" value="PPV_DNA_helicase_E1_C"/>
</dbReference>
<dbReference type="InterPro" id="IPR014000">
    <property type="entry name" value="PPV_DNA_helicase_E1_N"/>
</dbReference>
<dbReference type="InterPro" id="IPR046832">
    <property type="entry name" value="PPV_E1_DBD"/>
</dbReference>
<dbReference type="InterPro" id="IPR046935">
    <property type="entry name" value="PPV_E1_DBD_sf"/>
</dbReference>
<dbReference type="InterPro" id="IPR016393">
    <property type="entry name" value="Rep_E1_papillomaV"/>
</dbReference>
<dbReference type="InterPro" id="IPR037102">
    <property type="entry name" value="Znf_lg_T-Ag_D1_dom_sf"/>
</dbReference>
<dbReference type="Pfam" id="PF00519">
    <property type="entry name" value="PPV_E1_C"/>
    <property type="match status" value="1"/>
</dbReference>
<dbReference type="Pfam" id="PF20450">
    <property type="entry name" value="PPV_E1_DBD"/>
    <property type="match status" value="1"/>
</dbReference>
<dbReference type="Pfam" id="PF00524">
    <property type="entry name" value="PPV_E1_N"/>
    <property type="match status" value="1"/>
</dbReference>
<dbReference type="PIRSF" id="PIRSF003383">
    <property type="entry name" value="Rep_E1_papillomaV"/>
    <property type="match status" value="1"/>
</dbReference>
<dbReference type="SUPFAM" id="SSF55464">
    <property type="entry name" value="Origin of replication-binding domain, RBD-like"/>
    <property type="match status" value="1"/>
</dbReference>
<dbReference type="SUPFAM" id="SSF52540">
    <property type="entry name" value="P-loop containing nucleoside triphosphate hydrolases"/>
    <property type="match status" value="1"/>
</dbReference>
<dbReference type="PROSITE" id="PS51206">
    <property type="entry name" value="SF3_HELICASE_1"/>
    <property type="match status" value="1"/>
</dbReference>
<proteinExistence type="inferred from homology"/>
<feature type="chain" id="PRO_0000133108" description="Replication protein E1">
    <location>
        <begin position="1"/>
        <end position="681"/>
    </location>
</feature>
<feature type="domain" description="SF3 helicase" evidence="1">
    <location>
        <begin position="483"/>
        <end position="633"/>
    </location>
</feature>
<feature type="region of interest" description="Disordered" evidence="2">
    <location>
        <begin position="124"/>
        <end position="221"/>
    </location>
</feature>
<feature type="region of interest" description="DNA-binding region" evidence="1">
    <location>
        <begin position="218"/>
        <end position="384"/>
    </location>
</feature>
<feature type="region of interest" description="Disordered" evidence="2">
    <location>
        <begin position="657"/>
        <end position="681"/>
    </location>
</feature>
<feature type="short sequence motif" description="Nuclear localization signal" evidence="1">
    <location>
        <begin position="88"/>
        <end position="90"/>
    </location>
</feature>
<feature type="short sequence motif" description="Nuclear export signal" evidence="1">
    <location>
        <begin position="110"/>
        <end position="119"/>
    </location>
</feature>
<feature type="compositionally biased region" description="Polar residues" evidence="2">
    <location>
        <begin position="138"/>
        <end position="158"/>
    </location>
</feature>
<feature type="compositionally biased region" description="Polar residues" evidence="2">
    <location>
        <begin position="170"/>
        <end position="184"/>
    </location>
</feature>
<feature type="compositionally biased region" description="Basic and acidic residues" evidence="2">
    <location>
        <begin position="185"/>
        <end position="207"/>
    </location>
</feature>
<feature type="binding site" evidence="1">
    <location>
        <begin position="509"/>
        <end position="516"/>
    </location>
    <ligand>
        <name>ATP</name>
        <dbReference type="ChEBI" id="CHEBI:30616"/>
    </ligand>
</feature>
<feature type="modified residue" description="Phosphoserine; by host" evidence="1">
    <location>
        <position position="94"/>
    </location>
</feature>
<feature type="modified residue" description="Phosphoserine; by host" evidence="1">
    <location>
        <position position="98"/>
    </location>
</feature>
<feature type="modified residue" description="Phosphoserine; by host" evidence="1">
    <location>
        <position position="111"/>
    </location>
</feature>
<feature type="cross-link" description="Glycyl lysine isopeptide (Lys-Gly) (interchain with G-Cter in SUMO)" evidence="1">
    <location>
        <position position="590"/>
    </location>
</feature>
<protein>
    <recommendedName>
        <fullName evidence="1">Replication protein E1</fullName>
        <ecNumber evidence="1">5.6.2.4</ecNumber>
    </recommendedName>
    <alternativeName>
        <fullName evidence="1">ATP-dependent helicase E1</fullName>
    </alternativeName>
    <alternativeName>
        <fullName evidence="1">DNA 3'-5' helicase E1</fullName>
    </alternativeName>
</protein>